<reference key="1">
    <citation type="submission" date="2006-06" db="EMBL/GenBank/DDBJ databases">
        <title>Complete sequence of Rubrobacter xylanophilus DSM 9941.</title>
        <authorList>
            <consortium name="US DOE Joint Genome Institute"/>
            <person name="Copeland A."/>
            <person name="Lucas S."/>
            <person name="Lapidus A."/>
            <person name="Barry K."/>
            <person name="Detter J.C."/>
            <person name="Glavina del Rio T."/>
            <person name="Hammon N."/>
            <person name="Israni S."/>
            <person name="Dalin E."/>
            <person name="Tice H."/>
            <person name="Pitluck S."/>
            <person name="Munk A.C."/>
            <person name="Brettin T."/>
            <person name="Bruce D."/>
            <person name="Han C."/>
            <person name="Tapia R."/>
            <person name="Gilna P."/>
            <person name="Schmutz J."/>
            <person name="Larimer F."/>
            <person name="Land M."/>
            <person name="Hauser L."/>
            <person name="Kyrpides N."/>
            <person name="Lykidis A."/>
            <person name="da Costa M.S."/>
            <person name="Rainey F.A."/>
            <person name="Empadinhas N."/>
            <person name="Jolivet E."/>
            <person name="Battista J.R."/>
            <person name="Richardson P."/>
        </authorList>
    </citation>
    <scope>NUCLEOTIDE SEQUENCE [LARGE SCALE GENOMIC DNA]</scope>
    <source>
        <strain>DSM 9941 / JCM 11954 / NBRC 16129 / PRD-1</strain>
    </source>
</reference>
<proteinExistence type="inferred from homology"/>
<gene>
    <name evidence="1" type="primary">rpmE2</name>
    <name type="ordered locus">Rxyl_1654</name>
</gene>
<protein>
    <recommendedName>
        <fullName evidence="1">Large ribosomal subunit protein bL31B</fullName>
    </recommendedName>
    <alternativeName>
        <fullName evidence="3">50S ribosomal protein L31 type B</fullName>
    </alternativeName>
</protein>
<accession>Q1AVG3</accession>
<name>RL31B_RUBXD</name>
<sequence>MKKGIHPEYRPVVFRDAGADFAFLTRSTVETNKTIEWEDGNTYPLVELDISSASHPFYTGRQRIVDTGGRVQRFESRRRRRQQQSGEQG</sequence>
<dbReference type="EMBL" id="CP000386">
    <property type="protein sequence ID" value="ABG04615.1"/>
    <property type="molecule type" value="Genomic_DNA"/>
</dbReference>
<dbReference type="RefSeq" id="WP_011564632.1">
    <property type="nucleotide sequence ID" value="NC_008148.1"/>
</dbReference>
<dbReference type="SMR" id="Q1AVG3"/>
<dbReference type="STRING" id="266117.Rxyl_1654"/>
<dbReference type="KEGG" id="rxy:Rxyl_1654"/>
<dbReference type="eggNOG" id="COG0254">
    <property type="taxonomic scope" value="Bacteria"/>
</dbReference>
<dbReference type="HOGENOM" id="CLU_114306_2_2_11"/>
<dbReference type="OrthoDB" id="9803251at2"/>
<dbReference type="PhylomeDB" id="Q1AVG3"/>
<dbReference type="Proteomes" id="UP000006637">
    <property type="component" value="Chromosome"/>
</dbReference>
<dbReference type="GO" id="GO:1990904">
    <property type="term" value="C:ribonucleoprotein complex"/>
    <property type="evidence" value="ECO:0007669"/>
    <property type="project" value="UniProtKB-KW"/>
</dbReference>
<dbReference type="GO" id="GO:0005840">
    <property type="term" value="C:ribosome"/>
    <property type="evidence" value="ECO:0007669"/>
    <property type="project" value="UniProtKB-KW"/>
</dbReference>
<dbReference type="GO" id="GO:0003735">
    <property type="term" value="F:structural constituent of ribosome"/>
    <property type="evidence" value="ECO:0007669"/>
    <property type="project" value="InterPro"/>
</dbReference>
<dbReference type="GO" id="GO:0006412">
    <property type="term" value="P:translation"/>
    <property type="evidence" value="ECO:0007669"/>
    <property type="project" value="UniProtKB-UniRule"/>
</dbReference>
<dbReference type="Gene3D" id="4.10.830.30">
    <property type="entry name" value="Ribosomal protein L31"/>
    <property type="match status" value="1"/>
</dbReference>
<dbReference type="HAMAP" id="MF_00502">
    <property type="entry name" value="Ribosomal_bL31_2"/>
    <property type="match status" value="1"/>
</dbReference>
<dbReference type="InterPro" id="IPR034704">
    <property type="entry name" value="Ribosomal_bL28/bL31-like_sf"/>
</dbReference>
<dbReference type="InterPro" id="IPR002150">
    <property type="entry name" value="Ribosomal_bL31"/>
</dbReference>
<dbReference type="InterPro" id="IPR027493">
    <property type="entry name" value="Ribosomal_bL31_B"/>
</dbReference>
<dbReference type="InterPro" id="IPR042105">
    <property type="entry name" value="Ribosomal_bL31_sf"/>
</dbReference>
<dbReference type="NCBIfam" id="TIGR00105">
    <property type="entry name" value="L31"/>
    <property type="match status" value="1"/>
</dbReference>
<dbReference type="NCBIfam" id="NF002462">
    <property type="entry name" value="PRK01678.1"/>
    <property type="match status" value="1"/>
</dbReference>
<dbReference type="PANTHER" id="PTHR33280">
    <property type="entry name" value="50S RIBOSOMAL PROTEIN L31, CHLOROPLASTIC"/>
    <property type="match status" value="1"/>
</dbReference>
<dbReference type="PANTHER" id="PTHR33280:SF1">
    <property type="entry name" value="LARGE RIBOSOMAL SUBUNIT PROTEIN BL31C"/>
    <property type="match status" value="1"/>
</dbReference>
<dbReference type="Pfam" id="PF01197">
    <property type="entry name" value="Ribosomal_L31"/>
    <property type="match status" value="1"/>
</dbReference>
<dbReference type="PRINTS" id="PR01249">
    <property type="entry name" value="RIBOSOMALL31"/>
</dbReference>
<dbReference type="SUPFAM" id="SSF143800">
    <property type="entry name" value="L28p-like"/>
    <property type="match status" value="1"/>
</dbReference>
<dbReference type="PROSITE" id="PS01143">
    <property type="entry name" value="RIBOSOMAL_L31"/>
    <property type="match status" value="1"/>
</dbReference>
<evidence type="ECO:0000255" key="1">
    <source>
        <dbReference type="HAMAP-Rule" id="MF_00502"/>
    </source>
</evidence>
<evidence type="ECO:0000256" key="2">
    <source>
        <dbReference type="SAM" id="MobiDB-lite"/>
    </source>
</evidence>
<evidence type="ECO:0000305" key="3"/>
<feature type="chain" id="PRO_1000014715" description="Large ribosomal subunit protein bL31B">
    <location>
        <begin position="1"/>
        <end position="89"/>
    </location>
</feature>
<feature type="region of interest" description="Disordered" evidence="2">
    <location>
        <begin position="70"/>
        <end position="89"/>
    </location>
</feature>
<comment type="subunit">
    <text evidence="1">Part of the 50S ribosomal subunit.</text>
</comment>
<comment type="similarity">
    <text evidence="1">Belongs to the bacterial ribosomal protein bL31 family. Type B subfamily.</text>
</comment>
<organism>
    <name type="scientific">Rubrobacter xylanophilus (strain DSM 9941 / JCM 11954 / NBRC 16129 / PRD-1)</name>
    <dbReference type="NCBI Taxonomy" id="266117"/>
    <lineage>
        <taxon>Bacteria</taxon>
        <taxon>Bacillati</taxon>
        <taxon>Actinomycetota</taxon>
        <taxon>Rubrobacteria</taxon>
        <taxon>Rubrobacterales</taxon>
        <taxon>Rubrobacteraceae</taxon>
        <taxon>Rubrobacter</taxon>
    </lineage>
</organism>
<keyword id="KW-1185">Reference proteome</keyword>
<keyword id="KW-0687">Ribonucleoprotein</keyword>
<keyword id="KW-0689">Ribosomal protein</keyword>